<dbReference type="EMBL" id="CP000479">
    <property type="protein sequence ID" value="ABK66114.1"/>
    <property type="molecule type" value="Genomic_DNA"/>
</dbReference>
<dbReference type="RefSeq" id="WP_003873510.1">
    <property type="nucleotide sequence ID" value="NC_008595.1"/>
</dbReference>
<dbReference type="SMR" id="A0QL10"/>
<dbReference type="GeneID" id="75271977"/>
<dbReference type="KEGG" id="mav:MAV_4463"/>
<dbReference type="HOGENOM" id="CLU_158491_3_3_11"/>
<dbReference type="Proteomes" id="UP000001574">
    <property type="component" value="Chromosome"/>
</dbReference>
<dbReference type="GO" id="GO:0022625">
    <property type="term" value="C:cytosolic large ribosomal subunit"/>
    <property type="evidence" value="ECO:0007669"/>
    <property type="project" value="TreeGrafter"/>
</dbReference>
<dbReference type="GO" id="GO:0003735">
    <property type="term" value="F:structural constituent of ribosome"/>
    <property type="evidence" value="ECO:0007669"/>
    <property type="project" value="InterPro"/>
</dbReference>
<dbReference type="GO" id="GO:0006412">
    <property type="term" value="P:translation"/>
    <property type="evidence" value="ECO:0007669"/>
    <property type="project" value="UniProtKB-UniRule"/>
</dbReference>
<dbReference type="CDD" id="cd00427">
    <property type="entry name" value="Ribosomal_L29_HIP"/>
    <property type="match status" value="1"/>
</dbReference>
<dbReference type="FunFam" id="1.10.287.310:FF:000001">
    <property type="entry name" value="50S ribosomal protein L29"/>
    <property type="match status" value="1"/>
</dbReference>
<dbReference type="Gene3D" id="1.10.287.310">
    <property type="match status" value="1"/>
</dbReference>
<dbReference type="HAMAP" id="MF_00374">
    <property type="entry name" value="Ribosomal_uL29"/>
    <property type="match status" value="1"/>
</dbReference>
<dbReference type="InterPro" id="IPR050063">
    <property type="entry name" value="Ribosomal_protein_uL29"/>
</dbReference>
<dbReference type="InterPro" id="IPR001854">
    <property type="entry name" value="Ribosomal_uL29"/>
</dbReference>
<dbReference type="InterPro" id="IPR018254">
    <property type="entry name" value="Ribosomal_uL29_CS"/>
</dbReference>
<dbReference type="InterPro" id="IPR036049">
    <property type="entry name" value="Ribosomal_uL29_sf"/>
</dbReference>
<dbReference type="NCBIfam" id="TIGR00012">
    <property type="entry name" value="L29"/>
    <property type="match status" value="1"/>
</dbReference>
<dbReference type="PANTHER" id="PTHR10916">
    <property type="entry name" value="60S RIBOSOMAL PROTEIN L35/50S RIBOSOMAL PROTEIN L29"/>
    <property type="match status" value="1"/>
</dbReference>
<dbReference type="PANTHER" id="PTHR10916:SF0">
    <property type="entry name" value="LARGE RIBOSOMAL SUBUNIT PROTEIN UL29C"/>
    <property type="match status" value="1"/>
</dbReference>
<dbReference type="Pfam" id="PF00831">
    <property type="entry name" value="Ribosomal_L29"/>
    <property type="match status" value="1"/>
</dbReference>
<dbReference type="SUPFAM" id="SSF46561">
    <property type="entry name" value="Ribosomal protein L29 (L29p)"/>
    <property type="match status" value="1"/>
</dbReference>
<dbReference type="PROSITE" id="PS00579">
    <property type="entry name" value="RIBOSOMAL_L29"/>
    <property type="match status" value="1"/>
</dbReference>
<sequence>MAVGISPGELRELTDDELTERLRESKEELFNLRFQMATGQLTNNRRLRTVRQEIARVYTVLRERELGLASGPDGKES</sequence>
<keyword id="KW-0687">Ribonucleoprotein</keyword>
<keyword id="KW-0689">Ribosomal protein</keyword>
<name>RL29_MYCA1</name>
<reference key="1">
    <citation type="submission" date="2006-10" db="EMBL/GenBank/DDBJ databases">
        <authorList>
            <person name="Fleischmann R.D."/>
            <person name="Dodson R.J."/>
            <person name="Haft D.H."/>
            <person name="Merkel J.S."/>
            <person name="Nelson W.C."/>
            <person name="Fraser C.M."/>
        </authorList>
    </citation>
    <scope>NUCLEOTIDE SEQUENCE [LARGE SCALE GENOMIC DNA]</scope>
    <source>
        <strain>104</strain>
    </source>
</reference>
<organism>
    <name type="scientific">Mycobacterium avium (strain 104)</name>
    <dbReference type="NCBI Taxonomy" id="243243"/>
    <lineage>
        <taxon>Bacteria</taxon>
        <taxon>Bacillati</taxon>
        <taxon>Actinomycetota</taxon>
        <taxon>Actinomycetes</taxon>
        <taxon>Mycobacteriales</taxon>
        <taxon>Mycobacteriaceae</taxon>
        <taxon>Mycobacterium</taxon>
        <taxon>Mycobacterium avium complex (MAC)</taxon>
    </lineage>
</organism>
<comment type="similarity">
    <text evidence="1">Belongs to the universal ribosomal protein uL29 family.</text>
</comment>
<feature type="chain" id="PRO_1000007526" description="Large ribosomal subunit protein uL29">
    <location>
        <begin position="1"/>
        <end position="77"/>
    </location>
</feature>
<proteinExistence type="inferred from homology"/>
<accession>A0QL10</accession>
<protein>
    <recommendedName>
        <fullName evidence="1">Large ribosomal subunit protein uL29</fullName>
    </recommendedName>
    <alternativeName>
        <fullName evidence="2">50S ribosomal protein L29</fullName>
    </alternativeName>
</protein>
<gene>
    <name evidence="1" type="primary">rpmC</name>
    <name type="ordered locus">MAV_4463</name>
</gene>
<evidence type="ECO:0000255" key="1">
    <source>
        <dbReference type="HAMAP-Rule" id="MF_00374"/>
    </source>
</evidence>
<evidence type="ECO:0000305" key="2"/>